<dbReference type="EMBL" id="AC003671">
    <property type="protein sequence ID" value="AAC18807.1"/>
    <property type="status" value="ALT_INIT"/>
    <property type="molecule type" value="Genomic_DNA"/>
</dbReference>
<dbReference type="EMBL" id="CP002684">
    <property type="protein sequence ID" value="AEE35046.1"/>
    <property type="molecule type" value="Genomic_DNA"/>
</dbReference>
<dbReference type="EMBL" id="AY074345">
    <property type="protein sequence ID" value="AAL67041.1"/>
    <property type="molecule type" value="mRNA"/>
</dbReference>
<dbReference type="EMBL" id="BT003008">
    <property type="protein sequence ID" value="AAO22816.1"/>
    <property type="molecule type" value="mRNA"/>
</dbReference>
<dbReference type="EMBL" id="AF220759">
    <property type="protein sequence ID" value="AAF26446.1"/>
    <property type="molecule type" value="mRNA"/>
</dbReference>
<dbReference type="PIR" id="T01489">
    <property type="entry name" value="T01489"/>
</dbReference>
<dbReference type="RefSeq" id="NP_564987.2">
    <property type="nucleotide sequence ID" value="NM_105701.2"/>
</dbReference>
<dbReference type="SMR" id="Q8VXY7"/>
<dbReference type="FunCoup" id="Q8VXY7">
    <property type="interactions" value="1455"/>
</dbReference>
<dbReference type="STRING" id="3702.Q8VXY7"/>
<dbReference type="PaxDb" id="3702-AT1G70330.1"/>
<dbReference type="ProteomicsDB" id="220774"/>
<dbReference type="EnsemblPlants" id="AT1G70330.1">
    <property type="protein sequence ID" value="AT1G70330.1"/>
    <property type="gene ID" value="AT1G70330"/>
</dbReference>
<dbReference type="GeneID" id="843369"/>
<dbReference type="Gramene" id="AT1G70330.1">
    <property type="protein sequence ID" value="AT1G70330.1"/>
    <property type="gene ID" value="AT1G70330"/>
</dbReference>
<dbReference type="KEGG" id="ath:AT1G70330"/>
<dbReference type="Araport" id="AT1G70330"/>
<dbReference type="TAIR" id="AT1G70330">
    <property type="gene designation" value="ENT1"/>
</dbReference>
<dbReference type="eggNOG" id="KOG1479">
    <property type="taxonomic scope" value="Eukaryota"/>
</dbReference>
<dbReference type="HOGENOM" id="CLU_021611_5_0_1"/>
<dbReference type="InParanoid" id="Q8VXY7"/>
<dbReference type="OMA" id="GSPWTTK"/>
<dbReference type="PhylomeDB" id="Q8VXY7"/>
<dbReference type="PRO" id="PR:Q8VXY7"/>
<dbReference type="Proteomes" id="UP000006548">
    <property type="component" value="Chromosome 1"/>
</dbReference>
<dbReference type="ExpressionAtlas" id="Q8VXY7">
    <property type="expression patterns" value="baseline and differential"/>
</dbReference>
<dbReference type="GO" id="GO:0005739">
    <property type="term" value="C:mitochondrion"/>
    <property type="evidence" value="ECO:0007005"/>
    <property type="project" value="TAIR"/>
</dbReference>
<dbReference type="GO" id="GO:0000325">
    <property type="term" value="C:plant-type vacuole"/>
    <property type="evidence" value="ECO:0007005"/>
    <property type="project" value="TAIR"/>
</dbReference>
<dbReference type="GO" id="GO:0005774">
    <property type="term" value="C:vacuolar membrane"/>
    <property type="evidence" value="ECO:0007669"/>
    <property type="project" value="UniProtKB-SubCell"/>
</dbReference>
<dbReference type="GO" id="GO:0005337">
    <property type="term" value="F:nucleoside transmembrane transporter activity"/>
    <property type="evidence" value="ECO:0007669"/>
    <property type="project" value="InterPro"/>
</dbReference>
<dbReference type="InterPro" id="IPR034764">
    <property type="entry name" value="ENT1/ENT2"/>
</dbReference>
<dbReference type="InterPro" id="IPR002259">
    <property type="entry name" value="Eqnu_transpt"/>
</dbReference>
<dbReference type="InterPro" id="IPR036259">
    <property type="entry name" value="MFS_trans_sf"/>
</dbReference>
<dbReference type="NCBIfam" id="TIGR00939">
    <property type="entry name" value="2a57"/>
    <property type="match status" value="1"/>
</dbReference>
<dbReference type="PANTHER" id="PTHR10332">
    <property type="entry name" value="EQUILIBRATIVE NUCLEOSIDE TRANSPORTER"/>
    <property type="match status" value="1"/>
</dbReference>
<dbReference type="PANTHER" id="PTHR10332:SF10">
    <property type="entry name" value="EQUILIBRATIVE NUCLEOSIDE TRANSPORTER 4"/>
    <property type="match status" value="1"/>
</dbReference>
<dbReference type="Pfam" id="PF01733">
    <property type="entry name" value="Nucleoside_tran"/>
    <property type="match status" value="1"/>
</dbReference>
<dbReference type="PIRSF" id="PIRSF016379">
    <property type="entry name" value="ENT"/>
    <property type="match status" value="1"/>
</dbReference>
<dbReference type="PRINTS" id="PR01130">
    <property type="entry name" value="DERENTRNSPRT"/>
</dbReference>
<dbReference type="SUPFAM" id="SSF103473">
    <property type="entry name" value="MFS general substrate transporter"/>
    <property type="match status" value="1"/>
</dbReference>
<name>ENT1_ARATH</name>
<keyword id="KW-0472">Membrane</keyword>
<keyword id="KW-1185">Reference proteome</keyword>
<keyword id="KW-0812">Transmembrane</keyword>
<keyword id="KW-1133">Transmembrane helix</keyword>
<keyword id="KW-0813">Transport</keyword>
<keyword id="KW-0926">Vacuole</keyword>
<feature type="chain" id="PRO_0000419154" description="Equilibrative nucleotide transporter 1">
    <location>
        <begin position="1"/>
        <end position="450"/>
    </location>
</feature>
<feature type="transmembrane region" description="Helical" evidence="1">
    <location>
        <begin position="63"/>
        <end position="83"/>
    </location>
</feature>
<feature type="transmembrane region" description="Helical" evidence="1">
    <location>
        <begin position="101"/>
        <end position="121"/>
    </location>
</feature>
<feature type="transmembrane region" description="Helical" evidence="1">
    <location>
        <begin position="133"/>
        <end position="153"/>
    </location>
</feature>
<feature type="transmembrane region" description="Helical" evidence="1">
    <location>
        <begin position="168"/>
        <end position="188"/>
    </location>
</feature>
<feature type="transmembrane region" description="Helical" evidence="1">
    <location>
        <begin position="196"/>
        <end position="216"/>
    </location>
</feature>
<feature type="transmembrane region" description="Helical" evidence="1">
    <location>
        <begin position="234"/>
        <end position="254"/>
    </location>
</feature>
<feature type="transmembrane region" description="Helical" evidence="1">
    <location>
        <begin position="300"/>
        <end position="320"/>
    </location>
</feature>
<feature type="transmembrane region" description="Helical" evidence="1">
    <location>
        <begin position="334"/>
        <end position="354"/>
    </location>
</feature>
<feature type="transmembrane region" description="Helical" evidence="1">
    <location>
        <begin position="361"/>
        <end position="381"/>
    </location>
</feature>
<feature type="transmembrane region" description="Helical" evidence="1">
    <location>
        <begin position="394"/>
        <end position="414"/>
    </location>
</feature>
<feature type="transmembrane region" description="Helical" evidence="1">
    <location>
        <begin position="430"/>
        <end position="450"/>
    </location>
</feature>
<feature type="sequence conflict" description="In Ref. 4; AAF26446." evidence="7" ref="4">
    <original>L</original>
    <variation>P</variation>
    <location>
        <position position="111"/>
    </location>
</feature>
<feature type="sequence conflict" description="In Ref. 4; AAF26446." evidence="7" ref="4">
    <original>M</original>
    <variation>T</variation>
    <location>
        <position position="432"/>
    </location>
</feature>
<accession>Q8VXY7</accession>
<accession>O64603</accession>
<accession>Q9M5X9</accession>
<organism>
    <name type="scientific">Arabidopsis thaliana</name>
    <name type="common">Mouse-ear cress</name>
    <dbReference type="NCBI Taxonomy" id="3702"/>
    <lineage>
        <taxon>Eukaryota</taxon>
        <taxon>Viridiplantae</taxon>
        <taxon>Streptophyta</taxon>
        <taxon>Embryophyta</taxon>
        <taxon>Tracheophyta</taxon>
        <taxon>Spermatophyta</taxon>
        <taxon>Magnoliopsida</taxon>
        <taxon>eudicotyledons</taxon>
        <taxon>Gunneridae</taxon>
        <taxon>Pentapetalae</taxon>
        <taxon>rosids</taxon>
        <taxon>malvids</taxon>
        <taxon>Brassicales</taxon>
        <taxon>Brassicaceae</taxon>
        <taxon>Camelineae</taxon>
        <taxon>Arabidopsis</taxon>
    </lineage>
</organism>
<gene>
    <name type="primary">ENT1</name>
    <name type="ordered locus">At1g70330</name>
    <name type="ORF">F17O7.13</name>
</gene>
<sequence>MTPISQRISQKSPKLRETKQIQMTTTDKSAGIVTDSEAGPETSLLLNPHEGSTKKAPSDSYHFAYIIYFTLGVGFLLPWNAFITAVDYFSYLYPSTAVDRIFAVIYMLVALVCLFVIVVFYAHKSLASFRINLGLLLFVIALLVVPVLDLVYVKGQVGLYAGFDVTSAAVALSGLGDALMQGGLIGVAGEMPERYMQAVVAGTAGSGVLVSLLRILTKAVYPQDPDGLRKSANLYFAVGIVVMVICAVFYNVAHKLPVIKFHEERKNEELIREKSEEKGSLTGLAWRTTLWDIVTKVKSHGFGIVLLYMVTLSIFPGYITEDVHSELLTDWYPILLIAAYNVFDLVGKCLTAVFMLEDEKIAVGGSIARLLFYPLFWGCLHGPMFLRTEIPVTILTCLLGLTNGYLTSVLMILAPKSVPLRHSETAGIVTVMFLVVGLASGSVIAWFWVI</sequence>
<evidence type="ECO:0000255" key="1"/>
<evidence type="ECO:0000269" key="2">
    <source>
    </source>
</evidence>
<evidence type="ECO:0000269" key="3">
    <source>
    </source>
</evidence>
<evidence type="ECO:0000269" key="4">
    <source>
    </source>
</evidence>
<evidence type="ECO:0000269" key="5">
    <source>
    </source>
</evidence>
<evidence type="ECO:0000269" key="6">
    <source>
    </source>
</evidence>
<evidence type="ECO:0000305" key="7"/>
<evidence type="ECO:0000305" key="8">
    <source>
    </source>
</evidence>
<comment type="function">
    <text evidence="2 4 6">Nucleoside transporter involved in adenosine transport and required for nucleotide metabolism which influences growth and pollen germination. Has high affinity for adenosine when expressed in a heterologous system (yeast).</text>
</comment>
<comment type="biophysicochemical properties">
    <kinetics>
        <KM evidence="2 4">3.6 uM for adenosine</KM>
    </kinetics>
</comment>
<comment type="subcellular location">
    <subcellularLocation>
        <location evidence="5 8">Vacuole membrane</location>
        <topology evidence="1 8">Multi-pass membrane protein</topology>
    </subcellularLocation>
    <text>Tonoplast.</text>
</comment>
<comment type="tissue specificity">
    <text evidence="3">In young seedlings, expressed in root elongation zone, root cortex, root-hair, at the transition to the shoot and cotyledons. Expressed in hydathodes of fully developed leaves and pollen.</text>
</comment>
<comment type="induction">
    <text evidence="3">By nitrogen deficiency and 5-fluorouracil plus methotrexate.</text>
</comment>
<comment type="miscellaneous">
    <text evidence="8">Plants over-expressing ENT1 have decreased leaf content of adenosine and show growth deficiencies. Plants silencing ENT1 have increased leaf content of adenosine and decreased rate of pollen germination.</text>
</comment>
<comment type="similarity">
    <text evidence="7">Belongs to the SLC29A/ENT transporter (TC 2.A.57) family.</text>
</comment>
<comment type="sequence caution" evidence="7">
    <conflict type="erroneous initiation">
        <sequence resource="EMBL-CDS" id="AAC18807"/>
    </conflict>
    <text>Truncated N-terminus.</text>
</comment>
<reference key="1">
    <citation type="journal article" date="2000" name="Nature">
        <title>Sequence and analysis of chromosome 1 of the plant Arabidopsis thaliana.</title>
        <authorList>
            <person name="Theologis A."/>
            <person name="Ecker J.R."/>
            <person name="Palm C.J."/>
            <person name="Federspiel N.A."/>
            <person name="Kaul S."/>
            <person name="White O."/>
            <person name="Alonso J."/>
            <person name="Altafi H."/>
            <person name="Araujo R."/>
            <person name="Bowman C.L."/>
            <person name="Brooks S.Y."/>
            <person name="Buehler E."/>
            <person name="Chan A."/>
            <person name="Chao Q."/>
            <person name="Chen H."/>
            <person name="Cheuk R.F."/>
            <person name="Chin C.W."/>
            <person name="Chung M.K."/>
            <person name="Conn L."/>
            <person name="Conway A.B."/>
            <person name="Conway A.R."/>
            <person name="Creasy T.H."/>
            <person name="Dewar K."/>
            <person name="Dunn P."/>
            <person name="Etgu P."/>
            <person name="Feldblyum T.V."/>
            <person name="Feng J.-D."/>
            <person name="Fong B."/>
            <person name="Fujii C.Y."/>
            <person name="Gill J.E."/>
            <person name="Goldsmith A.D."/>
            <person name="Haas B."/>
            <person name="Hansen N.F."/>
            <person name="Hughes B."/>
            <person name="Huizar L."/>
            <person name="Hunter J.L."/>
            <person name="Jenkins J."/>
            <person name="Johnson-Hopson C."/>
            <person name="Khan S."/>
            <person name="Khaykin E."/>
            <person name="Kim C.J."/>
            <person name="Koo H.L."/>
            <person name="Kremenetskaia I."/>
            <person name="Kurtz D.B."/>
            <person name="Kwan A."/>
            <person name="Lam B."/>
            <person name="Langin-Hooper S."/>
            <person name="Lee A."/>
            <person name="Lee J.M."/>
            <person name="Lenz C.A."/>
            <person name="Li J.H."/>
            <person name="Li Y.-P."/>
            <person name="Lin X."/>
            <person name="Liu S.X."/>
            <person name="Liu Z.A."/>
            <person name="Luros J.S."/>
            <person name="Maiti R."/>
            <person name="Marziali A."/>
            <person name="Militscher J."/>
            <person name="Miranda M."/>
            <person name="Nguyen M."/>
            <person name="Nierman W.C."/>
            <person name="Osborne B.I."/>
            <person name="Pai G."/>
            <person name="Peterson J."/>
            <person name="Pham P.K."/>
            <person name="Rizzo M."/>
            <person name="Rooney T."/>
            <person name="Rowley D."/>
            <person name="Sakano H."/>
            <person name="Salzberg S.L."/>
            <person name="Schwartz J.R."/>
            <person name="Shinn P."/>
            <person name="Southwick A.M."/>
            <person name="Sun H."/>
            <person name="Tallon L.J."/>
            <person name="Tambunga G."/>
            <person name="Toriumi M.J."/>
            <person name="Town C.D."/>
            <person name="Utterback T."/>
            <person name="Van Aken S."/>
            <person name="Vaysberg M."/>
            <person name="Vysotskaia V.S."/>
            <person name="Walker M."/>
            <person name="Wu D."/>
            <person name="Yu G."/>
            <person name="Fraser C.M."/>
            <person name="Venter J.C."/>
            <person name="Davis R.W."/>
        </authorList>
    </citation>
    <scope>NUCLEOTIDE SEQUENCE [LARGE SCALE GENOMIC DNA]</scope>
    <source>
        <strain>cv. Columbia</strain>
    </source>
</reference>
<reference key="2">
    <citation type="journal article" date="2017" name="Plant J.">
        <title>Araport11: a complete reannotation of the Arabidopsis thaliana reference genome.</title>
        <authorList>
            <person name="Cheng C.Y."/>
            <person name="Krishnakumar V."/>
            <person name="Chan A.P."/>
            <person name="Thibaud-Nissen F."/>
            <person name="Schobel S."/>
            <person name="Town C.D."/>
        </authorList>
    </citation>
    <scope>GENOME REANNOTATION</scope>
    <source>
        <strain>cv. Columbia</strain>
    </source>
</reference>
<reference key="3">
    <citation type="journal article" date="2003" name="Science">
        <title>Empirical analysis of transcriptional activity in the Arabidopsis genome.</title>
        <authorList>
            <person name="Yamada K."/>
            <person name="Lim J."/>
            <person name="Dale J.M."/>
            <person name="Chen H."/>
            <person name="Shinn P."/>
            <person name="Palm C.J."/>
            <person name="Southwick A.M."/>
            <person name="Wu H.C."/>
            <person name="Kim C.J."/>
            <person name="Nguyen M."/>
            <person name="Pham P.K."/>
            <person name="Cheuk R.F."/>
            <person name="Karlin-Newmann G."/>
            <person name="Liu S.X."/>
            <person name="Lam B."/>
            <person name="Sakano H."/>
            <person name="Wu T."/>
            <person name="Yu G."/>
            <person name="Miranda M."/>
            <person name="Quach H.L."/>
            <person name="Tripp M."/>
            <person name="Chang C.H."/>
            <person name="Lee J.M."/>
            <person name="Toriumi M.J."/>
            <person name="Chan M.M."/>
            <person name="Tang C.C."/>
            <person name="Onodera C.S."/>
            <person name="Deng J.M."/>
            <person name="Akiyama K."/>
            <person name="Ansari Y."/>
            <person name="Arakawa T."/>
            <person name="Banh J."/>
            <person name="Banno F."/>
            <person name="Bowser L."/>
            <person name="Brooks S.Y."/>
            <person name="Carninci P."/>
            <person name="Chao Q."/>
            <person name="Choy N."/>
            <person name="Enju A."/>
            <person name="Goldsmith A.D."/>
            <person name="Gurjal M."/>
            <person name="Hansen N.F."/>
            <person name="Hayashizaki Y."/>
            <person name="Johnson-Hopson C."/>
            <person name="Hsuan V.W."/>
            <person name="Iida K."/>
            <person name="Karnes M."/>
            <person name="Khan S."/>
            <person name="Koesema E."/>
            <person name="Ishida J."/>
            <person name="Jiang P.X."/>
            <person name="Jones T."/>
            <person name="Kawai J."/>
            <person name="Kamiya A."/>
            <person name="Meyers C."/>
            <person name="Nakajima M."/>
            <person name="Narusaka M."/>
            <person name="Seki M."/>
            <person name="Sakurai T."/>
            <person name="Satou M."/>
            <person name="Tamse R."/>
            <person name="Vaysberg M."/>
            <person name="Wallender E.K."/>
            <person name="Wong C."/>
            <person name="Yamamura Y."/>
            <person name="Yuan S."/>
            <person name="Shinozaki K."/>
            <person name="Davis R.W."/>
            <person name="Theologis A."/>
            <person name="Ecker J.R."/>
        </authorList>
    </citation>
    <scope>NUCLEOTIDE SEQUENCE [LARGE SCALE MRNA]</scope>
    <source>
        <strain>cv. Columbia</strain>
    </source>
</reference>
<reference key="4">
    <citation type="submission" date="2000-01" db="EMBL/GenBank/DDBJ databases">
        <title>Cloning and in vitro expression of the cDNA of a putative nucleoside transporter from Arabidopsis thaliana.</title>
        <authorList>
            <person name="Li J."/>
            <person name="Wang D."/>
        </authorList>
    </citation>
    <scope>NUCLEOTIDE SEQUENCE [MRNA] OF 23-450</scope>
</reference>
<reference key="5">
    <citation type="journal article" date="2001" name="FEBS Lett.">
        <title>Characterisation of a concentrative type of adenosine transporter from Arabidopsis thaliana (ENT1,At).</title>
        <authorList>
            <person name="Moehlmann T."/>
            <person name="Mezher Z."/>
            <person name="Schwerdtfeger G."/>
            <person name="Neuhaus H.E."/>
        </authorList>
    </citation>
    <scope>FUNCTION</scope>
    <scope>BIOPHYSICOCHEMICAL PROPERTIES</scope>
</reference>
<reference key="6">
    <citation type="journal article" date="2003" name="J. Biol. Chem.">
        <title>Equilibrative nucleoside transporters of Arabidopsis thaliana. cDNA cloning, expression pattern, and analysis of transport activities.</title>
        <authorList>
            <person name="Li G."/>
            <person name="Liu K."/>
            <person name="Baldwin S.A."/>
            <person name="Wang D."/>
        </authorList>
    </citation>
    <scope>TISSUE SPECIFICITY</scope>
    <scope>INDUCTION</scope>
</reference>
<reference key="7">
    <citation type="journal article" date="2004" name="Biochem. J.">
        <title>Characterization of three novel members of the Arabidopsis thaliana equilibrative nucleoside transporter (ENT) family.</title>
        <authorList>
            <person name="Wormit A."/>
            <person name="Traub M."/>
            <person name="Floerchinger M."/>
            <person name="Neuhaus H.E."/>
            <person name="Moehlmann T."/>
        </authorList>
    </citation>
    <scope>FUNCTION</scope>
    <scope>BIOPHYSICOCHEMICAL PROPERTIES</scope>
</reference>
<reference key="8">
    <citation type="journal article" date="2007" name="Mol. Cell. Proteomics">
        <title>A proteomics dissection of Arabidopsis thaliana vacuoles isolated from cell culture.</title>
        <authorList>
            <person name="Jaquinod M."/>
            <person name="Villiers F."/>
            <person name="Kieffer-Jaquinod S."/>
            <person name="Hugouvieux V."/>
            <person name="Bruley C."/>
            <person name="Garin J."/>
            <person name="Bourguignon J."/>
        </authorList>
    </citation>
    <scope>IDENTIFICATION BY MASS SPECTROMETRY</scope>
    <scope>SUBCELLULAR LOCATION [LARGE SCALE ANALYSIS]</scope>
</reference>
<reference key="9">
    <citation type="journal article" date="2011" name="J. Exp. Bot.">
        <title>Equilibrative nucleoside transporter 1 (ENT1) is critical for pollen germination and vegetative growth in Arabidopsis.</title>
        <authorList>
            <person name="Bernard C."/>
            <person name="Traub M."/>
            <person name="Kunz H.H."/>
            <person name="Hach S."/>
            <person name="Trentmann O."/>
            <person name="Moehlmann T."/>
        </authorList>
    </citation>
    <scope>FUNCTION</scope>
    <scope>SUBCELLULAR LOCATION</scope>
</reference>
<protein>
    <recommendedName>
        <fullName>Equilibrative nucleotide transporter 1</fullName>
        <shortName>AtENT1</shortName>
    </recommendedName>
    <alternativeName>
        <fullName>Nucleoside transporter ENT1</fullName>
    </alternativeName>
</protein>
<proteinExistence type="evidence at protein level"/>